<gene>
    <name evidence="1" type="primary">phnN</name>
    <name type="ordered locus">Dbac_0820</name>
</gene>
<name>PHNN_DESBD</name>
<dbReference type="EC" id="2.7.4.23" evidence="1"/>
<dbReference type="EMBL" id="CP001629">
    <property type="protein sequence ID" value="ACU88938.1"/>
    <property type="molecule type" value="Genomic_DNA"/>
</dbReference>
<dbReference type="RefSeq" id="WP_015773038.1">
    <property type="nucleotide sequence ID" value="NC_013173.1"/>
</dbReference>
<dbReference type="SMR" id="C7LNQ3"/>
<dbReference type="STRING" id="525897.Dbac_0820"/>
<dbReference type="KEGG" id="dba:Dbac_0820"/>
<dbReference type="eggNOG" id="COG3709">
    <property type="taxonomic scope" value="Bacteria"/>
</dbReference>
<dbReference type="HOGENOM" id="CLU_102477_0_0_7"/>
<dbReference type="OrthoDB" id="341217at2"/>
<dbReference type="UniPathway" id="UPA00087">
    <property type="reaction ID" value="UER00175"/>
</dbReference>
<dbReference type="Proteomes" id="UP000002216">
    <property type="component" value="Chromosome"/>
</dbReference>
<dbReference type="GO" id="GO:0005524">
    <property type="term" value="F:ATP binding"/>
    <property type="evidence" value="ECO:0007669"/>
    <property type="project" value="UniProtKB-KW"/>
</dbReference>
<dbReference type="GO" id="GO:0033863">
    <property type="term" value="F:ribose 1,5-bisphosphate phosphokinase activity"/>
    <property type="evidence" value="ECO:0007669"/>
    <property type="project" value="UniProtKB-UniRule"/>
</dbReference>
<dbReference type="GO" id="GO:0006015">
    <property type="term" value="P:5-phosphoribose 1-diphosphate biosynthetic process"/>
    <property type="evidence" value="ECO:0007669"/>
    <property type="project" value="UniProtKB-UniRule"/>
</dbReference>
<dbReference type="GO" id="GO:0019634">
    <property type="term" value="P:organic phosphonate metabolic process"/>
    <property type="evidence" value="ECO:0007669"/>
    <property type="project" value="UniProtKB-UniRule"/>
</dbReference>
<dbReference type="Gene3D" id="3.40.50.300">
    <property type="entry name" value="P-loop containing nucleotide triphosphate hydrolases"/>
    <property type="match status" value="1"/>
</dbReference>
<dbReference type="HAMAP" id="MF_00836">
    <property type="entry name" value="PhnN"/>
    <property type="match status" value="1"/>
</dbReference>
<dbReference type="InterPro" id="IPR008145">
    <property type="entry name" value="GK/Ca_channel_bsu"/>
</dbReference>
<dbReference type="InterPro" id="IPR027417">
    <property type="entry name" value="P-loop_NTPase"/>
</dbReference>
<dbReference type="InterPro" id="IPR012699">
    <property type="entry name" value="PhnN"/>
</dbReference>
<dbReference type="NCBIfam" id="TIGR02322">
    <property type="entry name" value="phosphon_PhnN"/>
    <property type="match status" value="1"/>
</dbReference>
<dbReference type="NCBIfam" id="NF007485">
    <property type="entry name" value="PRK10078.1"/>
    <property type="match status" value="1"/>
</dbReference>
<dbReference type="SMART" id="SM00072">
    <property type="entry name" value="GuKc"/>
    <property type="match status" value="1"/>
</dbReference>
<dbReference type="SUPFAM" id="SSF52540">
    <property type="entry name" value="P-loop containing nucleoside triphosphate hydrolases"/>
    <property type="match status" value="1"/>
</dbReference>
<proteinExistence type="inferred from homology"/>
<evidence type="ECO:0000255" key="1">
    <source>
        <dbReference type="HAMAP-Rule" id="MF_00836"/>
    </source>
</evidence>
<feature type="chain" id="PRO_0000412780" description="Ribose 1,5-bisphosphate phosphokinase PhnN">
    <location>
        <begin position="1"/>
        <end position="187"/>
    </location>
</feature>
<feature type="binding site" evidence="1">
    <location>
        <begin position="9"/>
        <end position="16"/>
    </location>
    <ligand>
        <name>ATP</name>
        <dbReference type="ChEBI" id="CHEBI:30616"/>
    </ligand>
</feature>
<reference key="1">
    <citation type="journal article" date="2009" name="Stand. Genomic Sci.">
        <title>Complete genome sequence of Desulfomicrobium baculatum type strain (X).</title>
        <authorList>
            <person name="Copeland A."/>
            <person name="Spring S."/>
            <person name="Goker M."/>
            <person name="Schneider S."/>
            <person name="Lapidus A."/>
            <person name="Del Rio T.G."/>
            <person name="Tice H."/>
            <person name="Cheng J.F."/>
            <person name="Chen F."/>
            <person name="Nolan M."/>
            <person name="Bruce D."/>
            <person name="Goodwin L."/>
            <person name="Pitluck S."/>
            <person name="Ivanova N."/>
            <person name="Mavrommatis K."/>
            <person name="Ovchinnikova G."/>
            <person name="Pati A."/>
            <person name="Chen A."/>
            <person name="Palaniappan K."/>
            <person name="Land M."/>
            <person name="Hauser L."/>
            <person name="Chang Y.J."/>
            <person name="Jeffries C.C."/>
            <person name="Meincke L."/>
            <person name="Sims D."/>
            <person name="Brettin T."/>
            <person name="Detter J.C."/>
            <person name="Han C."/>
            <person name="Chain P."/>
            <person name="Bristow J."/>
            <person name="Eisen J.A."/>
            <person name="Markowitz V."/>
            <person name="Hugenholtz P."/>
            <person name="Kyrpides N.C."/>
            <person name="Klenk H.P."/>
            <person name="Lucas S."/>
        </authorList>
    </citation>
    <scope>NUCLEOTIDE SEQUENCE [LARGE SCALE GENOMIC DNA]</scope>
    <source>
        <strain>DSM 4028 / VKM B-1378 / X</strain>
    </source>
</reference>
<accession>C7LNQ3</accession>
<protein>
    <recommendedName>
        <fullName evidence="1">Ribose 1,5-bisphosphate phosphokinase PhnN</fullName>
        <ecNumber evidence="1">2.7.4.23</ecNumber>
    </recommendedName>
    <alternativeName>
        <fullName evidence="1">Ribose 1,5-bisphosphokinase</fullName>
    </alternativeName>
</protein>
<keyword id="KW-0067">ATP-binding</keyword>
<keyword id="KW-0547">Nucleotide-binding</keyword>
<keyword id="KW-1185">Reference proteome</keyword>
<keyword id="KW-0808">Transferase</keyword>
<sequence length="187" mass="20232">MSKLIYIMGPSGSGKDSLMAEARLRLAAEAPVVFAHRYITRPADAGGENHVALSRAEFQLRLSRGLFALSWESHGFAYGIGREIDIWMESGLSVVVNGSRGALSAALQAYPELLPVLIDVPEHILRERLGARGREDAGEIEARLVRARMAVVEAPELVRFDNSGPLAERGQALAGLILETTISGRKS</sequence>
<comment type="function">
    <text evidence="1">Catalyzes the phosphorylation of ribose 1,5-bisphosphate to 5-phospho-D-ribosyl alpha-1-diphosphate (PRPP).</text>
</comment>
<comment type="catalytic activity">
    <reaction evidence="1">
        <text>alpha-D-ribose 1,5-bisphosphate + ATP = 5-phospho-alpha-D-ribose 1-diphosphate + ADP</text>
        <dbReference type="Rhea" id="RHEA:20109"/>
        <dbReference type="ChEBI" id="CHEBI:30616"/>
        <dbReference type="ChEBI" id="CHEBI:58017"/>
        <dbReference type="ChEBI" id="CHEBI:68688"/>
        <dbReference type="ChEBI" id="CHEBI:456216"/>
        <dbReference type="EC" id="2.7.4.23"/>
    </reaction>
</comment>
<comment type="pathway">
    <text evidence="1">Metabolic intermediate biosynthesis; 5-phospho-alpha-D-ribose 1-diphosphate biosynthesis; 5-phospho-alpha-D-ribose 1-diphosphate from D-ribose 5-phosphate (route II): step 3/3.</text>
</comment>
<comment type="similarity">
    <text evidence="1">Belongs to the ribose 1,5-bisphosphokinase family.</text>
</comment>
<organism>
    <name type="scientific">Desulfomicrobium baculatum (strain DSM 4028 / VKM B-1378 / X)</name>
    <name type="common">Desulfovibrio baculatus</name>
    <dbReference type="NCBI Taxonomy" id="525897"/>
    <lineage>
        <taxon>Bacteria</taxon>
        <taxon>Pseudomonadati</taxon>
        <taxon>Thermodesulfobacteriota</taxon>
        <taxon>Desulfovibrionia</taxon>
        <taxon>Desulfovibrionales</taxon>
        <taxon>Desulfomicrobiaceae</taxon>
        <taxon>Desulfomicrobium</taxon>
    </lineage>
</organism>